<gene>
    <name evidence="1" type="primary">rsmJ</name>
    <name type="ordered locus">PBPRA3533</name>
</gene>
<keyword id="KW-0963">Cytoplasm</keyword>
<keyword id="KW-0489">Methyltransferase</keyword>
<keyword id="KW-1185">Reference proteome</keyword>
<keyword id="KW-0698">rRNA processing</keyword>
<keyword id="KW-0949">S-adenosyl-L-methionine</keyword>
<keyword id="KW-0808">Transferase</keyword>
<dbReference type="EC" id="2.1.1.242" evidence="1"/>
<dbReference type="EMBL" id="CR378674">
    <property type="protein sequence ID" value="CAG21804.1"/>
    <property type="status" value="ALT_INIT"/>
    <property type="molecule type" value="Genomic_DNA"/>
</dbReference>
<dbReference type="RefSeq" id="WP_041394588.1">
    <property type="nucleotide sequence ID" value="NC_006370.1"/>
</dbReference>
<dbReference type="SMR" id="Q6LLM4"/>
<dbReference type="STRING" id="298386.PBPRA3533"/>
<dbReference type="KEGG" id="ppr:PBPRA3533"/>
<dbReference type="eggNOG" id="COG0742">
    <property type="taxonomic scope" value="Bacteria"/>
</dbReference>
<dbReference type="HOGENOM" id="CLU_076324_0_0_6"/>
<dbReference type="Proteomes" id="UP000000593">
    <property type="component" value="Chromosome 1"/>
</dbReference>
<dbReference type="GO" id="GO:0005737">
    <property type="term" value="C:cytoplasm"/>
    <property type="evidence" value="ECO:0007669"/>
    <property type="project" value="UniProtKB-SubCell"/>
</dbReference>
<dbReference type="GO" id="GO:0008990">
    <property type="term" value="F:rRNA (guanine-N2-)-methyltransferase activity"/>
    <property type="evidence" value="ECO:0007669"/>
    <property type="project" value="UniProtKB-UniRule"/>
</dbReference>
<dbReference type="Gene3D" id="3.40.50.150">
    <property type="entry name" value="Vaccinia Virus protein VP39"/>
    <property type="match status" value="1"/>
</dbReference>
<dbReference type="Gene3D" id="3.40.1630.10">
    <property type="entry name" value="YhiQ-like domain"/>
    <property type="match status" value="1"/>
</dbReference>
<dbReference type="HAMAP" id="MF_01523">
    <property type="entry name" value="16SrRNA_methyltr_J"/>
    <property type="match status" value="1"/>
</dbReference>
<dbReference type="InterPro" id="IPR007536">
    <property type="entry name" value="16SrRNA_methylTrfase_J"/>
</dbReference>
<dbReference type="InterPro" id="IPR029063">
    <property type="entry name" value="SAM-dependent_MTases_sf"/>
</dbReference>
<dbReference type="PANTHER" id="PTHR36112">
    <property type="entry name" value="RIBOSOMAL RNA SMALL SUBUNIT METHYLTRANSFERASE J"/>
    <property type="match status" value="1"/>
</dbReference>
<dbReference type="PANTHER" id="PTHR36112:SF1">
    <property type="entry name" value="RIBOSOMAL RNA SMALL SUBUNIT METHYLTRANSFERASE J"/>
    <property type="match status" value="1"/>
</dbReference>
<dbReference type="Pfam" id="PF04445">
    <property type="entry name" value="SAM_MT"/>
    <property type="match status" value="1"/>
</dbReference>
<dbReference type="SUPFAM" id="SSF53335">
    <property type="entry name" value="S-adenosyl-L-methionine-dependent methyltransferases"/>
    <property type="match status" value="1"/>
</dbReference>
<evidence type="ECO:0000255" key="1">
    <source>
        <dbReference type="HAMAP-Rule" id="MF_01523"/>
    </source>
</evidence>
<evidence type="ECO:0000305" key="2"/>
<reference key="1">
    <citation type="journal article" date="2005" name="Science">
        <title>Life at depth: Photobacterium profundum genome sequence and expression analysis.</title>
        <authorList>
            <person name="Vezzi A."/>
            <person name="Campanaro S."/>
            <person name="D'Angelo M."/>
            <person name="Simonato F."/>
            <person name="Vitulo N."/>
            <person name="Lauro F.M."/>
            <person name="Cestaro A."/>
            <person name="Malacrida G."/>
            <person name="Simionati B."/>
            <person name="Cannata N."/>
            <person name="Romualdi C."/>
            <person name="Bartlett D.H."/>
            <person name="Valle G."/>
        </authorList>
    </citation>
    <scope>NUCLEOTIDE SEQUENCE [LARGE SCALE GENOMIC DNA]</scope>
    <source>
        <strain>ATCC BAA-1253 / SS9</strain>
    </source>
</reference>
<sequence length="256" mass="27933">MQLALICENPERQNELDELAQRWGLSHDENSIFALVLTDTQLELRKLDEAKLGAVFVDLVSGAAAHRRKFGGGRGQAIAKAVGLKKGVMPRVLDGTAGLGRDAFVLASLGCTVQMVERHPVVAALLDDGLARAKQDPEIGGWITERLSLLHASSQDALVKLLEDPDFIAPDVVYLDPMYPHKKKSALVKKEMRVFQTLVGADNDADSLFAPAMALATKRVVVKRPDYAEFLANAKPSTAIETKKNRFDVYVKAAMT</sequence>
<name>RSMJ_PHOPR</name>
<organism>
    <name type="scientific">Photobacterium profundum (strain SS9)</name>
    <dbReference type="NCBI Taxonomy" id="298386"/>
    <lineage>
        <taxon>Bacteria</taxon>
        <taxon>Pseudomonadati</taxon>
        <taxon>Pseudomonadota</taxon>
        <taxon>Gammaproteobacteria</taxon>
        <taxon>Vibrionales</taxon>
        <taxon>Vibrionaceae</taxon>
        <taxon>Photobacterium</taxon>
    </lineage>
</organism>
<feature type="chain" id="PRO_0000212082" description="Ribosomal RNA small subunit methyltransferase J">
    <location>
        <begin position="1"/>
        <end position="256"/>
    </location>
</feature>
<feature type="binding site" evidence="1">
    <location>
        <begin position="101"/>
        <end position="102"/>
    </location>
    <ligand>
        <name>S-adenosyl-L-methionine</name>
        <dbReference type="ChEBI" id="CHEBI:59789"/>
    </ligand>
</feature>
<feature type="binding site" evidence="1">
    <location>
        <begin position="117"/>
        <end position="118"/>
    </location>
    <ligand>
        <name>S-adenosyl-L-methionine</name>
        <dbReference type="ChEBI" id="CHEBI:59789"/>
    </ligand>
</feature>
<feature type="binding site" evidence="1">
    <location>
        <begin position="153"/>
        <end position="154"/>
    </location>
    <ligand>
        <name>S-adenosyl-L-methionine</name>
        <dbReference type="ChEBI" id="CHEBI:59789"/>
    </ligand>
</feature>
<feature type="binding site" evidence="1">
    <location>
        <position position="176"/>
    </location>
    <ligand>
        <name>S-adenosyl-L-methionine</name>
        <dbReference type="ChEBI" id="CHEBI:59789"/>
    </ligand>
</feature>
<accession>Q6LLM4</accession>
<proteinExistence type="inferred from homology"/>
<comment type="function">
    <text evidence="1">Specifically methylates the guanosine in position 1516 of 16S rRNA.</text>
</comment>
<comment type="catalytic activity">
    <reaction evidence="1">
        <text>guanosine(1516) in 16S rRNA + S-adenosyl-L-methionine = N(2)-methylguanosine(1516) in 16S rRNA + S-adenosyl-L-homocysteine + H(+)</text>
        <dbReference type="Rhea" id="RHEA:43220"/>
        <dbReference type="Rhea" id="RHEA-COMP:10412"/>
        <dbReference type="Rhea" id="RHEA-COMP:10413"/>
        <dbReference type="ChEBI" id="CHEBI:15378"/>
        <dbReference type="ChEBI" id="CHEBI:57856"/>
        <dbReference type="ChEBI" id="CHEBI:59789"/>
        <dbReference type="ChEBI" id="CHEBI:74269"/>
        <dbReference type="ChEBI" id="CHEBI:74481"/>
        <dbReference type="EC" id="2.1.1.242"/>
    </reaction>
</comment>
<comment type="subcellular location">
    <subcellularLocation>
        <location evidence="1">Cytoplasm</location>
    </subcellularLocation>
</comment>
<comment type="similarity">
    <text evidence="1">Belongs to the methyltransferase superfamily. RsmJ family.</text>
</comment>
<comment type="sequence caution" evidence="2">
    <conflict type="erroneous initiation">
        <sequence resource="EMBL-CDS" id="CAG21804"/>
    </conflict>
    <text>Extended N-terminus.</text>
</comment>
<protein>
    <recommendedName>
        <fullName evidence="1">Ribosomal RNA small subunit methyltransferase J</fullName>
        <ecNumber evidence="1">2.1.1.242</ecNumber>
    </recommendedName>
    <alternativeName>
        <fullName evidence="1">16S rRNA m2G1516 methyltransferase</fullName>
    </alternativeName>
    <alternativeName>
        <fullName evidence="1">rRNA (guanine-N(2)-)-methyltransferase</fullName>
    </alternativeName>
</protein>